<protein>
    <recommendedName>
        <fullName evidence="1">Hydroxylamine reductase</fullName>
        <ecNumber evidence="1">1.7.99.1</ecNumber>
    </recommendedName>
    <alternativeName>
        <fullName evidence="1">Hybrid-cluster protein</fullName>
        <shortName evidence="1">HCP</shortName>
    </alternativeName>
    <alternativeName>
        <fullName evidence="1">Prismane protein</fullName>
    </alternativeName>
</protein>
<organism>
    <name type="scientific">Enterobacter sp. (strain 638)</name>
    <dbReference type="NCBI Taxonomy" id="399742"/>
    <lineage>
        <taxon>Bacteria</taxon>
        <taxon>Pseudomonadati</taxon>
        <taxon>Pseudomonadota</taxon>
        <taxon>Gammaproteobacteria</taxon>
        <taxon>Enterobacterales</taxon>
        <taxon>Enterobacteriaceae</taxon>
        <taxon>Enterobacter</taxon>
    </lineage>
</organism>
<evidence type="ECO:0000255" key="1">
    <source>
        <dbReference type="HAMAP-Rule" id="MF_00069"/>
    </source>
</evidence>
<dbReference type="EC" id="1.7.99.1" evidence="1"/>
<dbReference type="EMBL" id="CP000653">
    <property type="protein sequence ID" value="ABP60071.1"/>
    <property type="molecule type" value="Genomic_DNA"/>
</dbReference>
<dbReference type="RefSeq" id="WP_012016790.1">
    <property type="nucleotide sequence ID" value="NC_009436.1"/>
</dbReference>
<dbReference type="SMR" id="A4W8P1"/>
<dbReference type="STRING" id="399742.Ent638_1390"/>
<dbReference type="KEGG" id="ent:Ent638_1390"/>
<dbReference type="eggNOG" id="COG1151">
    <property type="taxonomic scope" value="Bacteria"/>
</dbReference>
<dbReference type="HOGENOM" id="CLU_038344_2_0_6"/>
<dbReference type="OrthoDB" id="9761526at2"/>
<dbReference type="Proteomes" id="UP000000230">
    <property type="component" value="Chromosome"/>
</dbReference>
<dbReference type="GO" id="GO:0005737">
    <property type="term" value="C:cytoplasm"/>
    <property type="evidence" value="ECO:0007669"/>
    <property type="project" value="UniProtKB-SubCell"/>
</dbReference>
<dbReference type="GO" id="GO:0051537">
    <property type="term" value="F:2 iron, 2 sulfur cluster binding"/>
    <property type="evidence" value="ECO:0007669"/>
    <property type="project" value="UniProtKB-KW"/>
</dbReference>
<dbReference type="GO" id="GO:0050418">
    <property type="term" value="F:hydroxylamine reductase activity"/>
    <property type="evidence" value="ECO:0007669"/>
    <property type="project" value="UniProtKB-UniRule"/>
</dbReference>
<dbReference type="GO" id="GO:0046872">
    <property type="term" value="F:metal ion binding"/>
    <property type="evidence" value="ECO:0007669"/>
    <property type="project" value="UniProtKB-KW"/>
</dbReference>
<dbReference type="GO" id="GO:0004601">
    <property type="term" value="F:peroxidase activity"/>
    <property type="evidence" value="ECO:0007669"/>
    <property type="project" value="TreeGrafter"/>
</dbReference>
<dbReference type="GO" id="GO:0042542">
    <property type="term" value="P:response to hydrogen peroxide"/>
    <property type="evidence" value="ECO:0007669"/>
    <property type="project" value="TreeGrafter"/>
</dbReference>
<dbReference type="CDD" id="cd01914">
    <property type="entry name" value="HCP"/>
    <property type="match status" value="1"/>
</dbReference>
<dbReference type="FunFam" id="1.20.1270.20:FF:000001">
    <property type="entry name" value="Hydroxylamine reductase"/>
    <property type="match status" value="1"/>
</dbReference>
<dbReference type="FunFam" id="1.20.1270.20:FF:000002">
    <property type="entry name" value="Hydroxylamine reductase"/>
    <property type="match status" value="1"/>
</dbReference>
<dbReference type="FunFam" id="3.40.50.2030:FF:000001">
    <property type="entry name" value="Hydroxylamine reductase"/>
    <property type="match status" value="1"/>
</dbReference>
<dbReference type="FunFam" id="3.40.50.2030:FF:000002">
    <property type="entry name" value="Hydroxylamine reductase"/>
    <property type="match status" value="1"/>
</dbReference>
<dbReference type="Gene3D" id="1.20.1270.20">
    <property type="match status" value="2"/>
</dbReference>
<dbReference type="Gene3D" id="3.40.50.2030">
    <property type="match status" value="2"/>
</dbReference>
<dbReference type="HAMAP" id="MF_00069">
    <property type="entry name" value="Hydroxylam_reduct"/>
    <property type="match status" value="1"/>
</dbReference>
<dbReference type="InterPro" id="IPR004137">
    <property type="entry name" value="HCP/CODH"/>
</dbReference>
<dbReference type="InterPro" id="IPR010048">
    <property type="entry name" value="Hydroxylam_reduct"/>
</dbReference>
<dbReference type="InterPro" id="IPR016099">
    <property type="entry name" value="Prismane-like_a/b-sand"/>
</dbReference>
<dbReference type="InterPro" id="IPR011254">
    <property type="entry name" value="Prismane-like_sf"/>
</dbReference>
<dbReference type="InterPro" id="IPR016100">
    <property type="entry name" value="Prismane_a-bundle"/>
</dbReference>
<dbReference type="NCBIfam" id="TIGR01703">
    <property type="entry name" value="hybrid_clust"/>
    <property type="match status" value="1"/>
</dbReference>
<dbReference type="NCBIfam" id="NF003658">
    <property type="entry name" value="PRK05290.1"/>
    <property type="match status" value="1"/>
</dbReference>
<dbReference type="PANTHER" id="PTHR30109">
    <property type="entry name" value="HYDROXYLAMINE REDUCTASE"/>
    <property type="match status" value="1"/>
</dbReference>
<dbReference type="PANTHER" id="PTHR30109:SF0">
    <property type="entry name" value="HYDROXYLAMINE REDUCTASE"/>
    <property type="match status" value="1"/>
</dbReference>
<dbReference type="Pfam" id="PF03063">
    <property type="entry name" value="Prismane"/>
    <property type="match status" value="1"/>
</dbReference>
<dbReference type="PIRSF" id="PIRSF000076">
    <property type="entry name" value="HCP"/>
    <property type="match status" value="1"/>
</dbReference>
<dbReference type="SUPFAM" id="SSF56821">
    <property type="entry name" value="Prismane protein-like"/>
    <property type="match status" value="1"/>
</dbReference>
<sequence>MFCVQCEQTIRTPAGNGCSYSQGMCGKTAETSDLQDLLIAALQGLSAWAAKAREYGIVDHYVDNFAPRAFFSTLTNVNFDSPRIVGYAREAIALREALKAQSLNADANAAVDNPMADLQLVSDDLGDLQRQAAEFTPNKDKAAIGENILGLRLLCLYGLKGAAAYMEHAHVLGQYDNDIYAQYHKIMAWLGTWPSDMNALLECSMEIGQMNFKVMSILDAGETDTYGHPTPTQVNVKATAGKCILISGHDLKDLYNLLQQTEGTGVNVYTHGEMLPAHGYPELRKFKHLVGNYGSGWQNQQVEFARFPGPIVMTSNCIIDPTVGSYDDRIWTRSIVGWPGVSHLEGDDFAPVITQAQQMAGFPFSEIEHMITVGFGRETLLGAADSLIDLVSREKLRHIFLVGGCDGARGERNYFTDFATSVPQDCLILTLACGKYRFNKLDFGDIEGLPRLIDAGQCNDAYSAIILAVTLAEKLGCGVNDLPLSLVLSWFEQKAIVILLTLLSLGVTNIVTGPTAPGFLTPDLLAVLNEKFGLRSVTTVEEDMQQLLSA</sequence>
<accession>A4W8P1</accession>
<proteinExistence type="inferred from homology"/>
<gene>
    <name evidence="1" type="primary">hcp</name>
    <name type="ordered locus">Ent638_1390</name>
</gene>
<name>HCP_ENT38</name>
<feature type="chain" id="PRO_1000057463" description="Hydroxylamine reductase">
    <location>
        <begin position="1"/>
        <end position="550"/>
    </location>
</feature>
<feature type="binding site" evidence="1">
    <location>
        <position position="3"/>
    </location>
    <ligand>
        <name>[2Fe-2S] cluster</name>
        <dbReference type="ChEBI" id="CHEBI:190135"/>
    </ligand>
</feature>
<feature type="binding site" evidence="1">
    <location>
        <position position="6"/>
    </location>
    <ligand>
        <name>[2Fe-2S] cluster</name>
        <dbReference type="ChEBI" id="CHEBI:190135"/>
    </ligand>
</feature>
<feature type="binding site" evidence="1">
    <location>
        <position position="18"/>
    </location>
    <ligand>
        <name>[2Fe-2S] cluster</name>
        <dbReference type="ChEBI" id="CHEBI:190135"/>
    </ligand>
</feature>
<feature type="binding site" evidence="1">
    <location>
        <position position="25"/>
    </location>
    <ligand>
        <name>[2Fe-2S] cluster</name>
        <dbReference type="ChEBI" id="CHEBI:190135"/>
    </ligand>
</feature>
<feature type="binding site" evidence="1">
    <location>
        <position position="249"/>
    </location>
    <ligand>
        <name>hybrid [4Fe-2O-2S] cluster</name>
        <dbReference type="ChEBI" id="CHEBI:60519"/>
    </ligand>
</feature>
<feature type="binding site" evidence="1">
    <location>
        <position position="273"/>
    </location>
    <ligand>
        <name>hybrid [4Fe-2O-2S] cluster</name>
        <dbReference type="ChEBI" id="CHEBI:60519"/>
    </ligand>
</feature>
<feature type="binding site" evidence="1">
    <location>
        <position position="317"/>
    </location>
    <ligand>
        <name>hybrid [4Fe-2O-2S] cluster</name>
        <dbReference type="ChEBI" id="CHEBI:60519"/>
    </ligand>
</feature>
<feature type="binding site" description="via persulfide group" evidence="1">
    <location>
        <position position="405"/>
    </location>
    <ligand>
        <name>hybrid [4Fe-2O-2S] cluster</name>
        <dbReference type="ChEBI" id="CHEBI:60519"/>
    </ligand>
</feature>
<feature type="binding site" evidence="1">
    <location>
        <position position="433"/>
    </location>
    <ligand>
        <name>hybrid [4Fe-2O-2S] cluster</name>
        <dbReference type="ChEBI" id="CHEBI:60519"/>
    </ligand>
</feature>
<feature type="binding site" evidence="1">
    <location>
        <position position="458"/>
    </location>
    <ligand>
        <name>hybrid [4Fe-2O-2S] cluster</name>
        <dbReference type="ChEBI" id="CHEBI:60519"/>
    </ligand>
</feature>
<feature type="binding site" evidence="1">
    <location>
        <position position="492"/>
    </location>
    <ligand>
        <name>hybrid [4Fe-2O-2S] cluster</name>
        <dbReference type="ChEBI" id="CHEBI:60519"/>
    </ligand>
</feature>
<feature type="binding site" evidence="1">
    <location>
        <position position="494"/>
    </location>
    <ligand>
        <name>hybrid [4Fe-2O-2S] cluster</name>
        <dbReference type="ChEBI" id="CHEBI:60519"/>
    </ligand>
</feature>
<feature type="modified residue" description="Cysteine persulfide" evidence="1">
    <location>
        <position position="405"/>
    </location>
</feature>
<keyword id="KW-0001">2Fe-2S</keyword>
<keyword id="KW-0963">Cytoplasm</keyword>
<keyword id="KW-0408">Iron</keyword>
<keyword id="KW-0411">Iron-sulfur</keyword>
<keyword id="KW-0479">Metal-binding</keyword>
<keyword id="KW-0560">Oxidoreductase</keyword>
<comment type="function">
    <text evidence="1">Catalyzes the reduction of hydroxylamine to form NH(3) and H(2)O.</text>
</comment>
<comment type="catalytic activity">
    <reaction evidence="1">
        <text>A + NH4(+) + H2O = hydroxylamine + AH2 + H(+)</text>
        <dbReference type="Rhea" id="RHEA:22052"/>
        <dbReference type="ChEBI" id="CHEBI:13193"/>
        <dbReference type="ChEBI" id="CHEBI:15377"/>
        <dbReference type="ChEBI" id="CHEBI:15378"/>
        <dbReference type="ChEBI" id="CHEBI:15429"/>
        <dbReference type="ChEBI" id="CHEBI:17499"/>
        <dbReference type="ChEBI" id="CHEBI:28938"/>
        <dbReference type="EC" id="1.7.99.1"/>
    </reaction>
</comment>
<comment type="cofactor">
    <cofactor evidence="1">
        <name>[2Fe-2S] cluster</name>
        <dbReference type="ChEBI" id="CHEBI:190135"/>
    </cofactor>
    <text evidence="1">Binds 1 [2Fe-2S] cluster.</text>
</comment>
<comment type="cofactor">
    <cofactor evidence="1">
        <name>hybrid [4Fe-2O-2S] cluster</name>
        <dbReference type="ChEBI" id="CHEBI:60519"/>
    </cofactor>
    <text evidence="1">Binds 1 hybrid [4Fe-2O-2S] cluster.</text>
</comment>
<comment type="subcellular location">
    <subcellularLocation>
        <location evidence="1">Cytoplasm</location>
    </subcellularLocation>
</comment>
<comment type="similarity">
    <text evidence="1">Belongs to the HCP family.</text>
</comment>
<reference key="1">
    <citation type="journal article" date="2010" name="PLoS Genet.">
        <title>Genome sequence of the plant growth promoting endophytic bacterium Enterobacter sp. 638.</title>
        <authorList>
            <person name="Taghavi S."/>
            <person name="van der Lelie D."/>
            <person name="Hoffman A."/>
            <person name="Zhang Y.B."/>
            <person name="Walla M.D."/>
            <person name="Vangronsveld J."/>
            <person name="Newman L."/>
            <person name="Monchy S."/>
        </authorList>
    </citation>
    <scope>NUCLEOTIDE SEQUENCE [LARGE SCALE GENOMIC DNA]</scope>
    <source>
        <strain>638</strain>
    </source>
</reference>